<reference key="1">
    <citation type="journal article" date="1997" name="Genomics">
        <title>Transcript mapping in a 46-kb sequenced region at the core of 12q13.3 amplification in human cancers.</title>
        <authorList>
            <person name="Elkahloun A.G."/>
            <person name="Krizman D.B."/>
            <person name="Wang Z."/>
            <person name="Hofmann T.A."/>
            <person name="Roe B.A."/>
            <person name="Meltzer P.S."/>
        </authorList>
    </citation>
    <scope>NUCLEOTIDE SEQUENCE [GENOMIC DNA]</scope>
    <scope>ALTERNATIVE SPLICING (ISOFORM 2)</scope>
    <scope>VARIANT VAL-1124</scope>
</reference>
<reference key="2">
    <citation type="submission" date="2002-01" db="EMBL/GenBank/DDBJ databases">
        <authorList>
            <person name="Roe B."/>
        </authorList>
    </citation>
    <scope>SEQUENCE REVISION TO 389; 768-769; 1124; 1137 AND 1147 (ISOFORM 2)</scope>
</reference>
<reference key="3">
    <citation type="journal article" date="2003" name="Mol. Cell. Biol.">
        <title>GGAPs, a new family of bifunctional GTP-binding and GTPase-activating proteins.</title>
        <authorList>
            <person name="Xia C."/>
            <person name="Ma W."/>
            <person name="Stafford L.J."/>
            <person name="Liu C."/>
            <person name="Gong L."/>
            <person name="Martin J.F."/>
            <person name="Liu M."/>
        </authorList>
    </citation>
    <scope>NUCLEOTIDE SEQUENCE [MRNA] (ISOFORM 2)</scope>
    <scope>TISSUE SPECIFICITY</scope>
    <scope>SUBCELLULAR LOCATION</scope>
    <scope>FUNCTION</scope>
    <source>
        <tissue>Heart</tissue>
    </source>
</reference>
<reference key="4">
    <citation type="journal article" date="2003" name="Nat. Neurosci.">
        <title>PI3 kinase enhancer-Homer complex couples mGluRI to PI3 kinase, preventing neuronal apoptosis.</title>
        <authorList>
            <person name="Rong R."/>
            <person name="Ahn J.-Y."/>
            <person name="Huang H."/>
            <person name="Nagata E."/>
            <person name="Kalman D."/>
            <person name="Kapp J.A."/>
            <person name="Tu J."/>
            <person name="Worley P.F."/>
            <person name="Snyder S.H."/>
            <person name="Ye K."/>
        </authorList>
    </citation>
    <scope>NUCLEOTIDE SEQUENCE [MRNA] (ISOFORM 1)</scope>
</reference>
<reference key="5">
    <citation type="submission" date="2001-08" db="EMBL/GenBank/DDBJ databases">
        <title>Kiaa0167 as a member (centaurin gamma1) of centaurin ArfGAP family.</title>
        <authorList>
            <person name="Hong W."/>
        </authorList>
    </citation>
    <scope>NUCLEOTIDE SEQUENCE [MRNA] (ISOFORM 2)</scope>
</reference>
<reference key="6">
    <citation type="journal article" date="1996" name="DNA Res.">
        <title>Prediction of the coding sequences of unidentified human genes. V. The coding sequences of 40 new genes (KIAA0161-KIAA0200) deduced by analysis of cDNA clones from human cell line KG-1.</title>
        <authorList>
            <person name="Nagase T."/>
            <person name="Seki N."/>
            <person name="Ishikawa K."/>
            <person name="Tanaka A."/>
            <person name="Nomura N."/>
        </authorList>
    </citation>
    <scope>NUCLEOTIDE SEQUENCE [LARGE SCALE MRNA] (ISOFORM 2)</scope>
    <source>
        <tissue>Bone marrow</tissue>
    </source>
</reference>
<reference key="7">
    <citation type="journal article" date="2004" name="Nat. Genet.">
        <title>Complete sequencing and characterization of 21,243 full-length human cDNAs.</title>
        <authorList>
            <person name="Ota T."/>
            <person name="Suzuki Y."/>
            <person name="Nishikawa T."/>
            <person name="Otsuki T."/>
            <person name="Sugiyama T."/>
            <person name="Irie R."/>
            <person name="Wakamatsu A."/>
            <person name="Hayashi K."/>
            <person name="Sato H."/>
            <person name="Nagai K."/>
            <person name="Kimura K."/>
            <person name="Makita H."/>
            <person name="Sekine M."/>
            <person name="Obayashi M."/>
            <person name="Nishi T."/>
            <person name="Shibahara T."/>
            <person name="Tanaka T."/>
            <person name="Ishii S."/>
            <person name="Yamamoto J."/>
            <person name="Saito K."/>
            <person name="Kawai Y."/>
            <person name="Isono Y."/>
            <person name="Nakamura Y."/>
            <person name="Nagahari K."/>
            <person name="Murakami K."/>
            <person name="Yasuda T."/>
            <person name="Iwayanagi T."/>
            <person name="Wagatsuma M."/>
            <person name="Shiratori A."/>
            <person name="Sudo H."/>
            <person name="Hosoiri T."/>
            <person name="Kaku Y."/>
            <person name="Kodaira H."/>
            <person name="Kondo H."/>
            <person name="Sugawara M."/>
            <person name="Takahashi M."/>
            <person name="Kanda K."/>
            <person name="Yokoi T."/>
            <person name="Furuya T."/>
            <person name="Kikkawa E."/>
            <person name="Omura Y."/>
            <person name="Abe K."/>
            <person name="Kamihara K."/>
            <person name="Katsuta N."/>
            <person name="Sato K."/>
            <person name="Tanikawa M."/>
            <person name="Yamazaki M."/>
            <person name="Ninomiya K."/>
            <person name="Ishibashi T."/>
            <person name="Yamashita H."/>
            <person name="Murakawa K."/>
            <person name="Fujimori K."/>
            <person name="Tanai H."/>
            <person name="Kimata M."/>
            <person name="Watanabe M."/>
            <person name="Hiraoka S."/>
            <person name="Chiba Y."/>
            <person name="Ishida S."/>
            <person name="Ono Y."/>
            <person name="Takiguchi S."/>
            <person name="Watanabe S."/>
            <person name="Yosida M."/>
            <person name="Hotuta T."/>
            <person name="Kusano J."/>
            <person name="Kanehori K."/>
            <person name="Takahashi-Fujii A."/>
            <person name="Hara H."/>
            <person name="Tanase T.-O."/>
            <person name="Nomura Y."/>
            <person name="Togiya S."/>
            <person name="Komai F."/>
            <person name="Hara R."/>
            <person name="Takeuchi K."/>
            <person name="Arita M."/>
            <person name="Imose N."/>
            <person name="Musashino K."/>
            <person name="Yuuki H."/>
            <person name="Oshima A."/>
            <person name="Sasaki N."/>
            <person name="Aotsuka S."/>
            <person name="Yoshikawa Y."/>
            <person name="Matsunawa H."/>
            <person name="Ichihara T."/>
            <person name="Shiohata N."/>
            <person name="Sano S."/>
            <person name="Moriya S."/>
            <person name="Momiyama H."/>
            <person name="Satoh N."/>
            <person name="Takami S."/>
            <person name="Terashima Y."/>
            <person name="Suzuki O."/>
            <person name="Nakagawa S."/>
            <person name="Senoh A."/>
            <person name="Mizoguchi H."/>
            <person name="Goto Y."/>
            <person name="Shimizu F."/>
            <person name="Wakebe H."/>
            <person name="Hishigaki H."/>
            <person name="Watanabe T."/>
            <person name="Sugiyama A."/>
            <person name="Takemoto M."/>
            <person name="Kawakami B."/>
            <person name="Yamazaki M."/>
            <person name="Watanabe K."/>
            <person name="Kumagai A."/>
            <person name="Itakura S."/>
            <person name="Fukuzumi Y."/>
            <person name="Fujimori Y."/>
            <person name="Komiyama M."/>
            <person name="Tashiro H."/>
            <person name="Tanigami A."/>
            <person name="Fujiwara T."/>
            <person name="Ono T."/>
            <person name="Yamada K."/>
            <person name="Fujii Y."/>
            <person name="Ozaki K."/>
            <person name="Hirao M."/>
            <person name="Ohmori Y."/>
            <person name="Kawabata A."/>
            <person name="Hikiji T."/>
            <person name="Kobatake N."/>
            <person name="Inagaki H."/>
            <person name="Ikema Y."/>
            <person name="Okamoto S."/>
            <person name="Okitani R."/>
            <person name="Kawakami T."/>
            <person name="Noguchi S."/>
            <person name="Itoh T."/>
            <person name="Shigeta K."/>
            <person name="Senba T."/>
            <person name="Matsumura K."/>
            <person name="Nakajima Y."/>
            <person name="Mizuno T."/>
            <person name="Morinaga M."/>
            <person name="Sasaki M."/>
            <person name="Togashi T."/>
            <person name="Oyama M."/>
            <person name="Hata H."/>
            <person name="Watanabe M."/>
            <person name="Komatsu T."/>
            <person name="Mizushima-Sugano J."/>
            <person name="Satoh T."/>
            <person name="Shirai Y."/>
            <person name="Takahashi Y."/>
            <person name="Nakagawa K."/>
            <person name="Okumura K."/>
            <person name="Nagase T."/>
            <person name="Nomura N."/>
            <person name="Kikuchi H."/>
            <person name="Masuho Y."/>
            <person name="Yamashita R."/>
            <person name="Nakai K."/>
            <person name="Yada T."/>
            <person name="Nakamura Y."/>
            <person name="Ohara O."/>
            <person name="Isogai T."/>
            <person name="Sugano S."/>
        </authorList>
    </citation>
    <scope>NUCLEOTIDE SEQUENCE [LARGE SCALE MRNA] (ISOFORM 2)</scope>
    <source>
        <tissue>Thymus</tissue>
    </source>
</reference>
<reference key="8">
    <citation type="journal article" date="2006" name="Nature">
        <title>The finished DNA sequence of human chromosome 12.</title>
        <authorList>
            <person name="Scherer S.E."/>
            <person name="Muzny D.M."/>
            <person name="Buhay C.J."/>
            <person name="Chen R."/>
            <person name="Cree A."/>
            <person name="Ding Y."/>
            <person name="Dugan-Rocha S."/>
            <person name="Gill R."/>
            <person name="Gunaratne P."/>
            <person name="Harris R.A."/>
            <person name="Hawes A.C."/>
            <person name="Hernandez J."/>
            <person name="Hodgson A.V."/>
            <person name="Hume J."/>
            <person name="Jackson A."/>
            <person name="Khan Z.M."/>
            <person name="Kovar-Smith C."/>
            <person name="Lewis L.R."/>
            <person name="Lozado R.J."/>
            <person name="Metzker M.L."/>
            <person name="Milosavljevic A."/>
            <person name="Miner G.R."/>
            <person name="Montgomery K.T."/>
            <person name="Morgan M.B."/>
            <person name="Nazareth L.V."/>
            <person name="Scott G."/>
            <person name="Sodergren E."/>
            <person name="Song X.-Z."/>
            <person name="Steffen D."/>
            <person name="Lovering R.C."/>
            <person name="Wheeler D.A."/>
            <person name="Worley K.C."/>
            <person name="Yuan Y."/>
            <person name="Zhang Z."/>
            <person name="Adams C.Q."/>
            <person name="Ansari-Lari M.A."/>
            <person name="Ayele M."/>
            <person name="Brown M.J."/>
            <person name="Chen G."/>
            <person name="Chen Z."/>
            <person name="Clerc-Blankenburg K.P."/>
            <person name="Davis C."/>
            <person name="Delgado O."/>
            <person name="Dinh H.H."/>
            <person name="Draper H."/>
            <person name="Gonzalez-Garay M.L."/>
            <person name="Havlak P."/>
            <person name="Jackson L.R."/>
            <person name="Jacob L.S."/>
            <person name="Kelly S.H."/>
            <person name="Li L."/>
            <person name="Li Z."/>
            <person name="Liu J."/>
            <person name="Liu W."/>
            <person name="Lu J."/>
            <person name="Maheshwari M."/>
            <person name="Nguyen B.-V."/>
            <person name="Okwuonu G.O."/>
            <person name="Pasternak S."/>
            <person name="Perez L.M."/>
            <person name="Plopper F.J.H."/>
            <person name="Santibanez J."/>
            <person name="Shen H."/>
            <person name="Tabor P.E."/>
            <person name="Verduzco D."/>
            <person name="Waldron L."/>
            <person name="Wang Q."/>
            <person name="Williams G.A."/>
            <person name="Zhang J."/>
            <person name="Zhou J."/>
            <person name="Allen C.C."/>
            <person name="Amin A.G."/>
            <person name="Anyalebechi V."/>
            <person name="Bailey M."/>
            <person name="Barbaria J.A."/>
            <person name="Bimage K.E."/>
            <person name="Bryant N.P."/>
            <person name="Burch P.E."/>
            <person name="Burkett C.E."/>
            <person name="Burrell K.L."/>
            <person name="Calderon E."/>
            <person name="Cardenas V."/>
            <person name="Carter K."/>
            <person name="Casias K."/>
            <person name="Cavazos I."/>
            <person name="Cavazos S.R."/>
            <person name="Ceasar H."/>
            <person name="Chacko J."/>
            <person name="Chan S.N."/>
            <person name="Chavez D."/>
            <person name="Christopoulos C."/>
            <person name="Chu J."/>
            <person name="Cockrell R."/>
            <person name="Cox C.D."/>
            <person name="Dang M."/>
            <person name="Dathorne S.R."/>
            <person name="David R."/>
            <person name="Davis C.M."/>
            <person name="Davy-Carroll L."/>
            <person name="Deshazo D.R."/>
            <person name="Donlin J.E."/>
            <person name="D'Souza L."/>
            <person name="Eaves K.A."/>
            <person name="Egan A."/>
            <person name="Emery-Cohen A.J."/>
            <person name="Escotto M."/>
            <person name="Flagg N."/>
            <person name="Forbes L.D."/>
            <person name="Gabisi A.M."/>
            <person name="Garza M."/>
            <person name="Hamilton C."/>
            <person name="Henderson N."/>
            <person name="Hernandez O."/>
            <person name="Hines S."/>
            <person name="Hogues M.E."/>
            <person name="Huang M."/>
            <person name="Idlebird D.G."/>
            <person name="Johnson R."/>
            <person name="Jolivet A."/>
            <person name="Jones S."/>
            <person name="Kagan R."/>
            <person name="King L.M."/>
            <person name="Leal B."/>
            <person name="Lebow H."/>
            <person name="Lee S."/>
            <person name="LeVan J.M."/>
            <person name="Lewis L.C."/>
            <person name="London P."/>
            <person name="Lorensuhewa L.M."/>
            <person name="Loulseged H."/>
            <person name="Lovett D.A."/>
            <person name="Lucier A."/>
            <person name="Lucier R.L."/>
            <person name="Ma J."/>
            <person name="Madu R.C."/>
            <person name="Mapua P."/>
            <person name="Martindale A.D."/>
            <person name="Martinez E."/>
            <person name="Massey E."/>
            <person name="Mawhiney S."/>
            <person name="Meador M.G."/>
            <person name="Mendez S."/>
            <person name="Mercado C."/>
            <person name="Mercado I.C."/>
            <person name="Merritt C.E."/>
            <person name="Miner Z.L."/>
            <person name="Minja E."/>
            <person name="Mitchell T."/>
            <person name="Mohabbat F."/>
            <person name="Mohabbat K."/>
            <person name="Montgomery B."/>
            <person name="Moore N."/>
            <person name="Morris S."/>
            <person name="Munidasa M."/>
            <person name="Ngo R.N."/>
            <person name="Nguyen N.B."/>
            <person name="Nickerson E."/>
            <person name="Nwaokelemeh O.O."/>
            <person name="Nwokenkwo S."/>
            <person name="Obregon M."/>
            <person name="Oguh M."/>
            <person name="Oragunye N."/>
            <person name="Oviedo R.J."/>
            <person name="Parish B.J."/>
            <person name="Parker D.N."/>
            <person name="Parrish J."/>
            <person name="Parks K.L."/>
            <person name="Paul H.A."/>
            <person name="Payton B.A."/>
            <person name="Perez A."/>
            <person name="Perrin W."/>
            <person name="Pickens A."/>
            <person name="Primus E.L."/>
            <person name="Pu L.-L."/>
            <person name="Puazo M."/>
            <person name="Quiles M.M."/>
            <person name="Quiroz J.B."/>
            <person name="Rabata D."/>
            <person name="Reeves K."/>
            <person name="Ruiz S.J."/>
            <person name="Shao H."/>
            <person name="Sisson I."/>
            <person name="Sonaike T."/>
            <person name="Sorelle R.P."/>
            <person name="Sutton A.E."/>
            <person name="Svatek A.F."/>
            <person name="Svetz L.A."/>
            <person name="Tamerisa K.S."/>
            <person name="Taylor T.R."/>
            <person name="Teague B."/>
            <person name="Thomas N."/>
            <person name="Thorn R.D."/>
            <person name="Trejos Z.Y."/>
            <person name="Trevino B.K."/>
            <person name="Ukegbu O.N."/>
            <person name="Urban J.B."/>
            <person name="Vasquez L.I."/>
            <person name="Vera V.A."/>
            <person name="Villasana D.M."/>
            <person name="Wang L."/>
            <person name="Ward-Moore S."/>
            <person name="Warren J.T."/>
            <person name="Wei X."/>
            <person name="White F."/>
            <person name="Williamson A.L."/>
            <person name="Wleczyk R."/>
            <person name="Wooden H.S."/>
            <person name="Wooden S.H."/>
            <person name="Yen J."/>
            <person name="Yoon L."/>
            <person name="Yoon V."/>
            <person name="Zorrilla S.E."/>
            <person name="Nelson D."/>
            <person name="Kucherlapati R."/>
            <person name="Weinstock G."/>
            <person name="Gibbs R.A."/>
        </authorList>
    </citation>
    <scope>NUCLEOTIDE SEQUENCE [LARGE SCALE GENOMIC DNA]</scope>
</reference>
<reference key="9">
    <citation type="submission" date="2005-07" db="EMBL/GenBank/DDBJ databases">
        <authorList>
            <person name="Mural R.J."/>
            <person name="Istrail S."/>
            <person name="Sutton G.G."/>
            <person name="Florea L."/>
            <person name="Halpern A.L."/>
            <person name="Mobarry C.M."/>
            <person name="Lippert R."/>
            <person name="Walenz B."/>
            <person name="Shatkay H."/>
            <person name="Dew I."/>
            <person name="Miller J.R."/>
            <person name="Flanigan M.J."/>
            <person name="Edwards N.J."/>
            <person name="Bolanos R."/>
            <person name="Fasulo D."/>
            <person name="Halldorsson B.V."/>
            <person name="Hannenhalli S."/>
            <person name="Turner R."/>
            <person name="Yooseph S."/>
            <person name="Lu F."/>
            <person name="Nusskern D.R."/>
            <person name="Shue B.C."/>
            <person name="Zheng X.H."/>
            <person name="Zhong F."/>
            <person name="Delcher A.L."/>
            <person name="Huson D.H."/>
            <person name="Kravitz S.A."/>
            <person name="Mouchard L."/>
            <person name="Reinert K."/>
            <person name="Remington K.A."/>
            <person name="Clark A.G."/>
            <person name="Waterman M.S."/>
            <person name="Eichler E.E."/>
            <person name="Adams M.D."/>
            <person name="Hunkapiller M.W."/>
            <person name="Myers E.W."/>
            <person name="Venter J.C."/>
        </authorList>
    </citation>
    <scope>NUCLEOTIDE SEQUENCE [LARGE SCALE GENOMIC DNA]</scope>
</reference>
<reference key="10">
    <citation type="journal article" date="2004" name="Genome Res.">
        <title>The status, quality, and expansion of the NIH full-length cDNA project: the Mammalian Gene Collection (MGC).</title>
        <authorList>
            <consortium name="The MGC Project Team"/>
        </authorList>
    </citation>
    <scope>NUCLEOTIDE SEQUENCE [LARGE SCALE MRNA] (ISOFORM 2)</scope>
    <source>
        <tissue>Blood</tissue>
    </source>
</reference>
<reference key="11">
    <citation type="journal article" date="2004" name="J. Biol. Chem.">
        <title>PIKE (phosphatidylinositol 3-kinase enhancer)-A GTPase stimulates Akt activity and mediates cellular invasion.</title>
        <authorList>
            <person name="Ahn J.-Y."/>
            <person name="Rong R."/>
            <person name="Kroll T.G."/>
            <person name="Van Meir E.G."/>
            <person name="Snyder S.H."/>
            <person name="Ye K."/>
        </authorList>
    </citation>
    <scope>TISSUE SPECIFICITY</scope>
    <scope>SUBCELLULAR LOCATION</scope>
    <scope>INTERACTION WITH AKT1</scope>
    <scope>FUNCTION</scope>
</reference>
<reference key="12">
    <citation type="journal article" date="2004" name="Proc. Natl. Acad. Sci. U.S.A.">
        <title>PIKE-A is amplified in human cancers and prevents apoptosis by up-regulating Akt.</title>
        <authorList>
            <person name="Ahn J.-Y."/>
            <person name="Hu Y."/>
            <person name="Kroll T.G."/>
            <person name="Allard P."/>
            <person name="Ye K."/>
        </authorList>
    </citation>
    <scope>TISSUE SPECIFICITY</scope>
    <scope>INTERACTION WITH AKT1</scope>
    <scope>FUNCTION</scope>
</reference>
<reference key="13">
    <citation type="journal article" date="2005" name="J. Cell Sci.">
        <title>The Arf GAPs AGAP1 and AGAP2 distinguish between the adaptor protein complexes AP-1 and AP-3.</title>
        <authorList>
            <person name="Nie Z."/>
            <person name="Fei J."/>
            <person name="Premont R.T."/>
            <person name="Randazzo P.A."/>
        </authorList>
    </citation>
    <scope>TISSUE SPECIFICITY</scope>
    <scope>INTERACTION WITH THE AP-1 COMPLEX</scope>
    <scope>FUNCTION</scope>
</reference>
<reference key="14">
    <citation type="journal article" date="2005" name="Neuropathol. Appl. Neurobiol.">
        <title>Genetic alteration and expression of the phosphoinositol-3-kinase/Akt pathway genes PIK3CA and PIKE in human glioblastomas.</title>
        <authorList>
            <person name="Knobbe C.B."/>
            <person name="Trampe-Kieslich A."/>
            <person name="Reifenberger G."/>
        </authorList>
    </citation>
    <scope>TISSUE SPECIFICITY</scope>
</reference>
<reference key="15">
    <citation type="journal article" date="2007" name="Cell Death Differ.">
        <title>Src-family tyrosine kinase fyn phosphorylates phosphatidylinositol 3-kinase enhancer-activating Akt, preventing its apoptotic cleavage and promoting cell survival.</title>
        <authorList>
            <person name="Tang X."/>
            <person name="Feng Y."/>
            <person name="Ye K."/>
        </authorList>
    </citation>
    <scope>PHOSPHORYLATION AT TYR-682 AND TYR-774 (ISOFORM 2) BY FYN</scope>
</reference>
<reference key="16">
    <citation type="journal article" date="2009" name="Sci. Signal.">
        <title>Quantitative phosphoproteomic analysis of T cell receptor signaling reveals system-wide modulation of protein-protein interactions.</title>
        <authorList>
            <person name="Mayya V."/>
            <person name="Lundgren D.H."/>
            <person name="Hwang S.-I."/>
            <person name="Rezaul K."/>
            <person name="Wu L."/>
            <person name="Eng J.K."/>
            <person name="Rodionov V."/>
            <person name="Han D.K."/>
        </authorList>
    </citation>
    <scope>PHOSPHORYLATION [LARGE SCALE ANALYSIS] AT SER-638</scope>
    <scope>IDENTIFICATION BY MASS SPECTROMETRY [LARGE SCALE ANALYSIS]</scope>
    <source>
        <tissue>Leukemic T-cell</tissue>
    </source>
</reference>
<reference key="17">
    <citation type="journal article" date="2007" name="Biochem. J.">
        <title>The centaurin gamma-1 GTPase-like domain functions as an NTPase.</title>
        <authorList>
            <person name="Soundararajan M."/>
            <person name="Yang X."/>
            <person name="Elkins J.M."/>
            <person name="Sobott F."/>
            <person name="Doyle D.A."/>
        </authorList>
    </citation>
    <scope>X-RAY CRYSTALLOGRAPHY (1.5 ANGSTROMS) OF 402-577</scope>
</reference>
<reference key="18">
    <citation type="journal article" date="2008" name="J. Mol. Biol.">
        <title>Split pleckstrin homology domain-mediated cytoplasmic-nuclear localization of PI3-kinase enhancer GTPase.</title>
        <authorList>
            <person name="Yan J."/>
            <person name="Wen W."/>
            <person name="Chan L.N."/>
            <person name="Zhang M."/>
        </authorList>
    </citation>
    <scope>STRUCTURE BY NMR OF 674-914</scope>
</reference>
<reference key="19">
    <citation type="journal article" date="2005" name="Proc. Natl. Acad. Sci. U.S.A.">
        <title>Phosphoinositol lipids bind to phosphatidylinositol 3 (PI3)-kinase enhancer GTPase and mediate its stimulatory effect on PI3-kinase and Akt signalings.</title>
        <authorList>
            <person name="Hu Y."/>
            <person name="Liu Z."/>
            <person name="Ye K."/>
        </authorList>
    </citation>
    <scope>VARIANTS ALA-455; GLY-518; ILE-568; VAL-651; VAL-767; ASP-939; MET-947 AND PRO-1022</scope>
    <scope>SUBCELLULAR LOCATION</scope>
</reference>
<reference key="20">
    <citation type="journal article" date="2006" name="Science">
        <title>The consensus coding sequences of human breast and colorectal cancers.</title>
        <authorList>
            <person name="Sjoeblom T."/>
            <person name="Jones S."/>
            <person name="Wood L.D."/>
            <person name="Parsons D.W."/>
            <person name="Lin J."/>
            <person name="Barber T.D."/>
            <person name="Mandelker D."/>
            <person name="Leary R.J."/>
            <person name="Ptak J."/>
            <person name="Silliman N."/>
            <person name="Szabo S."/>
            <person name="Buckhaults P."/>
            <person name="Farrell C."/>
            <person name="Meeh P."/>
            <person name="Markowitz S.D."/>
            <person name="Willis J."/>
            <person name="Dawson D."/>
            <person name="Willson J.K.V."/>
            <person name="Gazdar A.F."/>
            <person name="Hartigan J."/>
            <person name="Wu L."/>
            <person name="Liu C."/>
            <person name="Parmigiani G."/>
            <person name="Park B.H."/>
            <person name="Bachman K.E."/>
            <person name="Papadopoulos N."/>
            <person name="Vogelstein B."/>
            <person name="Kinzler K.W."/>
            <person name="Velculescu V.E."/>
        </authorList>
    </citation>
    <scope>VARIANTS [LARGE SCALE ANALYSIS] ALA-339 AND TYR-816</scope>
</reference>
<keyword id="KW-0002">3D-structure</keyword>
<keyword id="KW-0025">Alternative splicing</keyword>
<keyword id="KW-0040">ANK repeat</keyword>
<keyword id="KW-0963">Cytoplasm</keyword>
<keyword id="KW-0342">GTP-binding</keyword>
<keyword id="KW-0343">GTPase activation</keyword>
<keyword id="KW-0479">Metal-binding</keyword>
<keyword id="KW-0547">Nucleotide-binding</keyword>
<keyword id="KW-0539">Nucleus</keyword>
<keyword id="KW-0597">Phosphoprotein</keyword>
<keyword id="KW-0653">Protein transport</keyword>
<keyword id="KW-1267">Proteomics identification</keyword>
<keyword id="KW-1185">Reference proteome</keyword>
<keyword id="KW-0677">Repeat</keyword>
<keyword id="KW-0813">Transport</keyword>
<keyword id="KW-0043">Tumor suppressor</keyword>
<keyword id="KW-0862">Zinc</keyword>
<keyword id="KW-0863">Zinc-finger</keyword>
<gene>
    <name type="primary">AGAP2</name>
    <name type="synonym">CENTG1</name>
    <name type="synonym">KIAA0167</name>
</gene>
<organism>
    <name type="scientific">Homo sapiens</name>
    <name type="common">Human</name>
    <dbReference type="NCBI Taxonomy" id="9606"/>
    <lineage>
        <taxon>Eukaryota</taxon>
        <taxon>Metazoa</taxon>
        <taxon>Chordata</taxon>
        <taxon>Craniata</taxon>
        <taxon>Vertebrata</taxon>
        <taxon>Euteleostomi</taxon>
        <taxon>Mammalia</taxon>
        <taxon>Eutheria</taxon>
        <taxon>Euarchontoglires</taxon>
        <taxon>Primates</taxon>
        <taxon>Haplorrhini</taxon>
        <taxon>Catarrhini</taxon>
        <taxon>Hominidae</taxon>
        <taxon>Homo</taxon>
    </lineage>
</organism>
<dbReference type="EMBL" id="U81031">
    <property type="protein sequence ID" value="AAC39522.2"/>
    <property type="molecule type" value="Genomic_DNA"/>
</dbReference>
<dbReference type="EMBL" id="AF384128">
    <property type="protein sequence ID" value="AAO39848.1"/>
    <property type="molecule type" value="mRNA"/>
</dbReference>
<dbReference type="EMBL" id="AY128689">
    <property type="protein sequence ID" value="AAM97540.1"/>
    <property type="molecule type" value="mRNA"/>
</dbReference>
<dbReference type="EMBL" id="D79989">
    <property type="protein sequence ID" value="BAA11484.2"/>
    <property type="status" value="ALT_INIT"/>
    <property type="molecule type" value="mRNA"/>
</dbReference>
<dbReference type="EMBL" id="AF413077">
    <property type="protein sequence ID" value="AAL04171.1"/>
    <property type="molecule type" value="mRNA"/>
</dbReference>
<dbReference type="EMBL" id="AK292672">
    <property type="protein sequence ID" value="BAF85361.1"/>
    <property type="molecule type" value="mRNA"/>
</dbReference>
<dbReference type="EMBL" id="AC025165">
    <property type="status" value="NOT_ANNOTATED_CDS"/>
    <property type="molecule type" value="Genomic_DNA"/>
</dbReference>
<dbReference type="EMBL" id="CH471054">
    <property type="protein sequence ID" value="EAW97049.1"/>
    <property type="molecule type" value="Genomic_DNA"/>
</dbReference>
<dbReference type="EMBL" id="BC028020">
    <property type="protein sequence ID" value="AAH28020.1"/>
    <property type="molecule type" value="mRNA"/>
</dbReference>
<dbReference type="CCDS" id="CCDS44932.1">
    <molecule id="Q99490-1"/>
</dbReference>
<dbReference type="CCDS" id="CCDS8951.1">
    <molecule id="Q99490-2"/>
</dbReference>
<dbReference type="RefSeq" id="NP_001116244.1">
    <property type="nucleotide sequence ID" value="NM_001122772.2"/>
</dbReference>
<dbReference type="RefSeq" id="NP_055585.1">
    <molecule id="Q99490-2"/>
    <property type="nucleotide sequence ID" value="NM_014770.4"/>
</dbReference>
<dbReference type="PDB" id="2BMJ">
    <property type="method" value="X-ray"/>
    <property type="resolution" value="2.10 A"/>
    <property type="chains" value="A=402-577"/>
</dbReference>
<dbReference type="PDB" id="2IWR">
    <property type="method" value="X-ray"/>
    <property type="resolution" value="1.50 A"/>
    <property type="chains" value="A=402-577"/>
</dbReference>
<dbReference type="PDB" id="2RLO">
    <property type="method" value="NMR"/>
    <property type="chains" value="A=674-914"/>
</dbReference>
<dbReference type="PDBsum" id="2BMJ"/>
<dbReference type="PDBsum" id="2IWR"/>
<dbReference type="PDBsum" id="2RLO"/>
<dbReference type="SMR" id="Q99490"/>
<dbReference type="BioGRID" id="125549">
    <property type="interactions" value="24"/>
</dbReference>
<dbReference type="FunCoup" id="Q99490">
    <property type="interactions" value="1005"/>
</dbReference>
<dbReference type="IntAct" id="Q99490">
    <property type="interactions" value="11"/>
</dbReference>
<dbReference type="MINT" id="Q99490"/>
<dbReference type="STRING" id="9606.ENSP00000449241"/>
<dbReference type="GlyGen" id="Q99490">
    <property type="glycosylation" value="7 sites, 1 O-linked glycan (4 sites)"/>
</dbReference>
<dbReference type="iPTMnet" id="Q99490"/>
<dbReference type="PhosphoSitePlus" id="Q99490"/>
<dbReference type="BioMuta" id="AGAP2"/>
<dbReference type="DMDM" id="97535883"/>
<dbReference type="jPOST" id="Q99490"/>
<dbReference type="MassIVE" id="Q99490"/>
<dbReference type="PaxDb" id="9606-ENSP00000449241"/>
<dbReference type="PeptideAtlas" id="Q99490"/>
<dbReference type="ProteomicsDB" id="78295">
    <molecule id="Q99490-1"/>
</dbReference>
<dbReference type="ProteomicsDB" id="78296">
    <molecule id="Q99490-2"/>
</dbReference>
<dbReference type="Pumba" id="Q99490"/>
<dbReference type="Antibodypedia" id="16354">
    <property type="antibodies" value="294 antibodies from 33 providers"/>
</dbReference>
<dbReference type="DNASU" id="116986"/>
<dbReference type="Ensembl" id="ENST00000257897.7">
    <molecule id="Q99490-2"/>
    <property type="protein sequence ID" value="ENSP00000257897.3"/>
    <property type="gene ID" value="ENSG00000135439.12"/>
</dbReference>
<dbReference type="GeneID" id="116986"/>
<dbReference type="KEGG" id="hsa:116986"/>
<dbReference type="MANE-Select" id="ENST00000547588.6">
    <property type="protein sequence ID" value="ENSP00000449241.1"/>
    <property type="RefSeq nucleotide sequence ID" value="NM_001122772.3"/>
    <property type="RefSeq protein sequence ID" value="NP_001116244.1"/>
</dbReference>
<dbReference type="UCSC" id="uc001spr.4">
    <molecule id="Q99490-1"/>
    <property type="organism name" value="human"/>
</dbReference>
<dbReference type="AGR" id="HGNC:16921"/>
<dbReference type="CTD" id="116986"/>
<dbReference type="DisGeNET" id="116986"/>
<dbReference type="GeneCards" id="AGAP2"/>
<dbReference type="HGNC" id="HGNC:16921">
    <property type="gene designation" value="AGAP2"/>
</dbReference>
<dbReference type="HPA" id="ENSG00000135439">
    <property type="expression patterns" value="Tissue enriched (brain)"/>
</dbReference>
<dbReference type="MIM" id="605476">
    <property type="type" value="gene"/>
</dbReference>
<dbReference type="neXtProt" id="NX_Q99490"/>
<dbReference type="OpenTargets" id="ENSG00000135439"/>
<dbReference type="PharmGKB" id="PA26411"/>
<dbReference type="VEuPathDB" id="HostDB:ENSG00000135439"/>
<dbReference type="eggNOG" id="KOG0705">
    <property type="taxonomic scope" value="Eukaryota"/>
</dbReference>
<dbReference type="GeneTree" id="ENSGT00940000158956"/>
<dbReference type="HOGENOM" id="CLU_007326_1_0_1"/>
<dbReference type="InParanoid" id="Q99490"/>
<dbReference type="OMA" id="PAKRKMW"/>
<dbReference type="OrthoDB" id="6136903at2759"/>
<dbReference type="PAN-GO" id="Q99490">
    <property type="GO annotations" value="5 GO annotations based on evolutionary models"/>
</dbReference>
<dbReference type="PhylomeDB" id="Q99490"/>
<dbReference type="TreeFam" id="TF317762"/>
<dbReference type="PathwayCommons" id="Q99490"/>
<dbReference type="Reactome" id="R-HSA-373752">
    <property type="pathway name" value="Netrin-1 signaling"/>
</dbReference>
<dbReference type="SignaLink" id="Q99490"/>
<dbReference type="SIGNOR" id="Q99490"/>
<dbReference type="BioGRID-ORCS" id="116986">
    <property type="hits" value="56 hits in 1149 CRISPR screens"/>
</dbReference>
<dbReference type="CD-CODE" id="FB4E32DD">
    <property type="entry name" value="Presynaptic clusters and postsynaptic densities"/>
</dbReference>
<dbReference type="ChiTaRS" id="AGAP2">
    <property type="organism name" value="human"/>
</dbReference>
<dbReference type="EvolutionaryTrace" id="Q99490"/>
<dbReference type="GeneWiki" id="CENTG1"/>
<dbReference type="GenomeRNAi" id="116986"/>
<dbReference type="Pharos" id="Q99490">
    <property type="development level" value="Tbio"/>
</dbReference>
<dbReference type="PRO" id="PR:Q99490"/>
<dbReference type="Proteomes" id="UP000005640">
    <property type="component" value="Chromosome 12"/>
</dbReference>
<dbReference type="RNAct" id="Q99490">
    <property type="molecule type" value="protein"/>
</dbReference>
<dbReference type="Bgee" id="ENSG00000135439">
    <property type="expression patterns" value="Expressed in right hemisphere of cerebellum and 159 other cell types or tissues"/>
</dbReference>
<dbReference type="ExpressionAtlas" id="Q99490">
    <property type="expression patterns" value="baseline and differential"/>
</dbReference>
<dbReference type="GO" id="GO:0005737">
    <property type="term" value="C:cytoplasm"/>
    <property type="evidence" value="ECO:0000314"/>
    <property type="project" value="MGI"/>
</dbReference>
<dbReference type="GO" id="GO:0005829">
    <property type="term" value="C:cytosol"/>
    <property type="evidence" value="ECO:0000314"/>
    <property type="project" value="HPA"/>
</dbReference>
<dbReference type="GO" id="GO:0005768">
    <property type="term" value="C:endosome"/>
    <property type="evidence" value="ECO:0000314"/>
    <property type="project" value="MGI"/>
</dbReference>
<dbReference type="GO" id="GO:0070062">
    <property type="term" value="C:extracellular exosome"/>
    <property type="evidence" value="ECO:0007005"/>
    <property type="project" value="UniProtKB"/>
</dbReference>
<dbReference type="GO" id="GO:0090543">
    <property type="term" value="C:Flemming body"/>
    <property type="evidence" value="ECO:0000314"/>
    <property type="project" value="HPA"/>
</dbReference>
<dbReference type="GO" id="GO:0016020">
    <property type="term" value="C:membrane"/>
    <property type="evidence" value="ECO:0007005"/>
    <property type="project" value="UniProtKB"/>
</dbReference>
<dbReference type="GO" id="GO:0005654">
    <property type="term" value="C:nucleoplasm"/>
    <property type="evidence" value="ECO:0000314"/>
    <property type="project" value="HPA"/>
</dbReference>
<dbReference type="GO" id="GO:0005634">
    <property type="term" value="C:nucleus"/>
    <property type="evidence" value="ECO:0000314"/>
    <property type="project" value="MGI"/>
</dbReference>
<dbReference type="GO" id="GO:0005524">
    <property type="term" value="F:ATP binding"/>
    <property type="evidence" value="ECO:0000314"/>
    <property type="project" value="MGI"/>
</dbReference>
<dbReference type="GO" id="GO:0005525">
    <property type="term" value="F:GTP binding"/>
    <property type="evidence" value="ECO:0000314"/>
    <property type="project" value="MGI"/>
</dbReference>
<dbReference type="GO" id="GO:0005096">
    <property type="term" value="F:GTPase activator activity"/>
    <property type="evidence" value="ECO:0000314"/>
    <property type="project" value="MGI"/>
</dbReference>
<dbReference type="GO" id="GO:0003924">
    <property type="term" value="F:GTPase activity"/>
    <property type="evidence" value="ECO:0000314"/>
    <property type="project" value="MGI"/>
</dbReference>
<dbReference type="GO" id="GO:0141038">
    <property type="term" value="F:phosphatidylinositol 3-kinase activator activity"/>
    <property type="evidence" value="ECO:0000304"/>
    <property type="project" value="ARUK-UCL"/>
</dbReference>
<dbReference type="GO" id="GO:0035014">
    <property type="term" value="F:phosphatidylinositol 3-kinase regulator activity"/>
    <property type="evidence" value="ECO:0000314"/>
    <property type="project" value="MGI"/>
</dbReference>
<dbReference type="GO" id="GO:0030295">
    <property type="term" value="F:protein kinase activator activity"/>
    <property type="evidence" value="ECO:0000314"/>
    <property type="project" value="MGI"/>
</dbReference>
<dbReference type="GO" id="GO:0019901">
    <property type="term" value="F:protein kinase binding"/>
    <property type="evidence" value="ECO:0000314"/>
    <property type="project" value="MGI"/>
</dbReference>
<dbReference type="GO" id="GO:0008270">
    <property type="term" value="F:zinc ion binding"/>
    <property type="evidence" value="ECO:0007669"/>
    <property type="project" value="UniProtKB-KW"/>
</dbReference>
<dbReference type="GO" id="GO:0030036">
    <property type="term" value="P:actin cytoskeleton organization"/>
    <property type="evidence" value="ECO:0000314"/>
    <property type="project" value="MGI"/>
</dbReference>
<dbReference type="GO" id="GO:0016197">
    <property type="term" value="P:endosomal transport"/>
    <property type="evidence" value="ECO:0000314"/>
    <property type="project" value="MGI"/>
</dbReference>
<dbReference type="GO" id="GO:0043524">
    <property type="term" value="P:negative regulation of neuron apoptotic process"/>
    <property type="evidence" value="ECO:0000316"/>
    <property type="project" value="MGI"/>
</dbReference>
<dbReference type="GO" id="GO:0042177">
    <property type="term" value="P:negative regulation of protein catabolic process"/>
    <property type="evidence" value="ECO:0000314"/>
    <property type="project" value="MGI"/>
</dbReference>
<dbReference type="GO" id="GO:0045860">
    <property type="term" value="P:positive regulation of protein kinase activity"/>
    <property type="evidence" value="ECO:0000314"/>
    <property type="project" value="MGI"/>
</dbReference>
<dbReference type="GO" id="GO:0015031">
    <property type="term" value="P:protein transport"/>
    <property type="evidence" value="ECO:0007669"/>
    <property type="project" value="UniProtKB-KW"/>
</dbReference>
<dbReference type="CDD" id="cd08836">
    <property type="entry name" value="ArfGap_AGAP"/>
    <property type="match status" value="1"/>
</dbReference>
<dbReference type="CDD" id="cd04103">
    <property type="entry name" value="Centaurin_gamma"/>
    <property type="match status" value="1"/>
</dbReference>
<dbReference type="CDD" id="cd01250">
    <property type="entry name" value="PH_AGAP"/>
    <property type="match status" value="1"/>
</dbReference>
<dbReference type="FunFam" id="1.10.220.150:FF:000001">
    <property type="entry name" value="Arf-GAP with GTPase, ANK repeat and PH domain-containing protein 1"/>
    <property type="match status" value="1"/>
</dbReference>
<dbReference type="FunFam" id="1.25.40.20:FF:000084">
    <property type="entry name" value="Arf-GAP with GTPase, ANK repeat and PH domain-containing protein 2"/>
    <property type="match status" value="1"/>
</dbReference>
<dbReference type="FunFam" id="2.30.29.30:FF:000211">
    <property type="entry name" value="Arf-GAP with GTPase, ANK repeat and PH domain-containing protein 2"/>
    <property type="match status" value="1"/>
</dbReference>
<dbReference type="FunFam" id="3.40.50.300:FF:000545">
    <property type="entry name" value="arf-GAP with GTPase, ANK repeat and PH domain-containing protein 2"/>
    <property type="match status" value="1"/>
</dbReference>
<dbReference type="FunFam" id="2.30.29.30:FF:000239">
    <property type="entry name" value="arf-GAP with GTPase, ANK repeat and PH domain-containing protein 2 isoform X2"/>
    <property type="match status" value="1"/>
</dbReference>
<dbReference type="Gene3D" id="1.25.40.20">
    <property type="entry name" value="Ankyrin repeat-containing domain"/>
    <property type="match status" value="1"/>
</dbReference>
<dbReference type="Gene3D" id="1.10.220.150">
    <property type="entry name" value="Arf GTPase activating protein"/>
    <property type="match status" value="1"/>
</dbReference>
<dbReference type="Gene3D" id="3.40.50.300">
    <property type="entry name" value="P-loop containing nucleotide triphosphate hydrolases"/>
    <property type="match status" value="1"/>
</dbReference>
<dbReference type="Gene3D" id="2.30.29.30">
    <property type="entry name" value="Pleckstrin-homology domain (PH domain)/Phosphotyrosine-binding domain (PTB)"/>
    <property type="match status" value="2"/>
</dbReference>
<dbReference type="InterPro" id="IPR002110">
    <property type="entry name" value="Ankyrin_rpt"/>
</dbReference>
<dbReference type="InterPro" id="IPR036770">
    <property type="entry name" value="Ankyrin_rpt-contain_sf"/>
</dbReference>
<dbReference type="InterPro" id="IPR051282">
    <property type="entry name" value="Arf-GAP_GTPase_ANK_PH"/>
</dbReference>
<dbReference type="InterPro" id="IPR037278">
    <property type="entry name" value="ARFGAP/RecO"/>
</dbReference>
<dbReference type="InterPro" id="IPR001164">
    <property type="entry name" value="ArfGAP_dom"/>
</dbReference>
<dbReference type="InterPro" id="IPR038508">
    <property type="entry name" value="ArfGAP_dom_sf"/>
</dbReference>
<dbReference type="InterPro" id="IPR027417">
    <property type="entry name" value="P-loop_NTPase"/>
</dbReference>
<dbReference type="InterPro" id="IPR011993">
    <property type="entry name" value="PH-like_dom_sf"/>
</dbReference>
<dbReference type="InterPro" id="IPR001849">
    <property type="entry name" value="PH_domain"/>
</dbReference>
<dbReference type="InterPro" id="IPR001806">
    <property type="entry name" value="Small_GTPase"/>
</dbReference>
<dbReference type="PANTHER" id="PTHR45819:SF3">
    <property type="entry name" value="ARF-GAP WITH GTPASE, ANK REPEAT AND PH DOMAIN-CONTAINING PROTEIN 2"/>
    <property type="match status" value="1"/>
</dbReference>
<dbReference type="PANTHER" id="PTHR45819">
    <property type="entry name" value="CENTAURIN-GAMMA-1A"/>
    <property type="match status" value="1"/>
</dbReference>
<dbReference type="Pfam" id="PF12796">
    <property type="entry name" value="Ank_2"/>
    <property type="match status" value="1"/>
</dbReference>
<dbReference type="Pfam" id="PF01412">
    <property type="entry name" value="ArfGap"/>
    <property type="match status" value="1"/>
</dbReference>
<dbReference type="Pfam" id="PF00071">
    <property type="entry name" value="Ras"/>
    <property type="match status" value="1"/>
</dbReference>
<dbReference type="PRINTS" id="PR00405">
    <property type="entry name" value="REVINTRACTNG"/>
</dbReference>
<dbReference type="SMART" id="SM00105">
    <property type="entry name" value="ArfGap"/>
    <property type="match status" value="1"/>
</dbReference>
<dbReference type="SMART" id="SM00233">
    <property type="entry name" value="PH"/>
    <property type="match status" value="1"/>
</dbReference>
<dbReference type="SMART" id="SM00175">
    <property type="entry name" value="RAB"/>
    <property type="match status" value="1"/>
</dbReference>
<dbReference type="SMART" id="SM00173">
    <property type="entry name" value="RAS"/>
    <property type="match status" value="1"/>
</dbReference>
<dbReference type="SUPFAM" id="SSF48403">
    <property type="entry name" value="Ankyrin repeat"/>
    <property type="match status" value="1"/>
</dbReference>
<dbReference type="SUPFAM" id="SSF57863">
    <property type="entry name" value="ArfGap/RecO-like zinc finger"/>
    <property type="match status" value="1"/>
</dbReference>
<dbReference type="SUPFAM" id="SSF52540">
    <property type="entry name" value="P-loop containing nucleoside triphosphate hydrolases"/>
    <property type="match status" value="1"/>
</dbReference>
<dbReference type="SUPFAM" id="SSF50729">
    <property type="entry name" value="PH domain-like"/>
    <property type="match status" value="1"/>
</dbReference>
<dbReference type="PROSITE" id="PS50297">
    <property type="entry name" value="ANK_REP_REGION"/>
    <property type="match status" value="1"/>
</dbReference>
<dbReference type="PROSITE" id="PS50088">
    <property type="entry name" value="ANK_REPEAT"/>
    <property type="match status" value="1"/>
</dbReference>
<dbReference type="PROSITE" id="PS50115">
    <property type="entry name" value="ARFGAP"/>
    <property type="match status" value="1"/>
</dbReference>
<dbReference type="PROSITE" id="PS52057">
    <property type="entry name" value="GLD"/>
    <property type="match status" value="1"/>
</dbReference>
<dbReference type="PROSITE" id="PS50003">
    <property type="entry name" value="PH_DOMAIN"/>
    <property type="match status" value="1"/>
</dbReference>
<accession>Q99490</accession>
<accession>A8K9F7</accession>
<accession>F8VVT9</accession>
<accession>O00578</accession>
<accession>Q548E0</accession>
<accession>Q8IWU3</accession>
<evidence type="ECO:0000250" key="1"/>
<evidence type="ECO:0000250" key="2">
    <source>
        <dbReference type="UniProtKB" id="Q3UHD9"/>
    </source>
</evidence>
<evidence type="ECO:0000250" key="3">
    <source>
        <dbReference type="UniProtKB" id="Q8CGU4"/>
    </source>
</evidence>
<evidence type="ECO:0000255" key="4"/>
<evidence type="ECO:0000255" key="5">
    <source>
        <dbReference type="PROSITE-ProRule" id="PRU00145"/>
    </source>
</evidence>
<evidence type="ECO:0000255" key="6">
    <source>
        <dbReference type="PROSITE-ProRule" id="PRU00288"/>
    </source>
</evidence>
<evidence type="ECO:0000255" key="7">
    <source>
        <dbReference type="PROSITE-ProRule" id="PRU01402"/>
    </source>
</evidence>
<evidence type="ECO:0000256" key="8">
    <source>
        <dbReference type="SAM" id="MobiDB-lite"/>
    </source>
</evidence>
<evidence type="ECO:0000269" key="9">
    <source>
    </source>
</evidence>
<evidence type="ECO:0000269" key="10">
    <source>
    </source>
</evidence>
<evidence type="ECO:0000269" key="11">
    <source>
    </source>
</evidence>
<evidence type="ECO:0000269" key="12">
    <source>
    </source>
</evidence>
<evidence type="ECO:0000269" key="13">
    <source>
    </source>
</evidence>
<evidence type="ECO:0000269" key="14">
    <source>
    </source>
</evidence>
<evidence type="ECO:0000269" key="15">
    <source>
    </source>
</evidence>
<evidence type="ECO:0000269" key="16">
    <source>
    </source>
</evidence>
<evidence type="ECO:0000269" key="17">
    <source>
    </source>
</evidence>
<evidence type="ECO:0000303" key="18">
    <source>
    </source>
</evidence>
<evidence type="ECO:0000303" key="19">
    <source>
    </source>
</evidence>
<evidence type="ECO:0000303" key="20">
    <source>
    </source>
</evidence>
<evidence type="ECO:0000303" key="21">
    <source>
    </source>
</evidence>
<evidence type="ECO:0000303" key="22">
    <source ref="5"/>
</evidence>
<evidence type="ECO:0000305" key="23"/>
<evidence type="ECO:0007744" key="24">
    <source>
    </source>
</evidence>
<evidence type="ECO:0007829" key="25">
    <source>
        <dbReference type="PDB" id="2BMJ"/>
    </source>
</evidence>
<evidence type="ECO:0007829" key="26">
    <source>
        <dbReference type="PDB" id="2IWR"/>
    </source>
</evidence>
<evidence type="ECO:0007829" key="27">
    <source>
        <dbReference type="PDB" id="2RLO"/>
    </source>
</evidence>
<feature type="chain" id="PRO_0000074217" description="Arf-GAP with GTPase, ANK repeat and PH domain-containing protein 2">
    <location>
        <begin position="1"/>
        <end position="1192"/>
    </location>
</feature>
<feature type="domain" description="GLD" evidence="7">
    <location>
        <begin position="402"/>
        <end position="578"/>
    </location>
</feature>
<feature type="domain" description="PH" evidence="5">
    <location>
        <begin position="676"/>
        <end position="910"/>
    </location>
</feature>
<feature type="domain" description="Arf-GAP" evidence="6">
    <location>
        <begin position="931"/>
        <end position="1051"/>
    </location>
</feature>
<feature type="repeat" description="ANK 1">
    <location>
        <begin position="1090"/>
        <end position="1119"/>
    </location>
</feature>
<feature type="repeat" description="ANK 2">
    <location>
        <begin position="1123"/>
        <end position="1152"/>
    </location>
</feature>
<feature type="zinc finger region" description="C4-type" evidence="6">
    <location>
        <begin position="946"/>
        <end position="969"/>
    </location>
</feature>
<feature type="region of interest" description="Interaction with EPB41L1" evidence="1">
    <location>
        <begin position="1"/>
        <end position="23"/>
    </location>
</feature>
<feature type="region of interest" description="Disordered" evidence="8">
    <location>
        <begin position="24"/>
        <end position="377"/>
    </location>
</feature>
<feature type="region of interest" description="Interactions with HOMER1 and NF2" evidence="1">
    <location>
        <begin position="180"/>
        <end position="225"/>
    </location>
</feature>
<feature type="region of interest" description="Interaction with PLCG1" evidence="1">
    <location>
        <begin position="267"/>
        <end position="390"/>
    </location>
</feature>
<feature type="region of interest" description="G domain">
    <location>
        <begin position="405"/>
        <end position="572"/>
    </location>
</feature>
<feature type="region of interest" description="Disordered" evidence="8">
    <location>
        <begin position="582"/>
        <end position="619"/>
    </location>
</feature>
<feature type="region of interest" description="Disordered" evidence="8">
    <location>
        <begin position="634"/>
        <end position="673"/>
    </location>
</feature>
<feature type="region of interest" description="Disordered" evidence="8">
    <location>
        <begin position="769"/>
        <end position="854"/>
    </location>
</feature>
<feature type="region of interest" description="Disordered" evidence="8">
    <location>
        <begin position="1153"/>
        <end position="1192"/>
    </location>
</feature>
<feature type="compositionally biased region" description="Low complexity" evidence="8">
    <location>
        <begin position="35"/>
        <end position="44"/>
    </location>
</feature>
<feature type="compositionally biased region" description="Basic and acidic residues" evidence="8">
    <location>
        <begin position="47"/>
        <end position="62"/>
    </location>
</feature>
<feature type="compositionally biased region" description="Low complexity" evidence="8">
    <location>
        <begin position="79"/>
        <end position="91"/>
    </location>
</feature>
<feature type="compositionally biased region" description="Pro residues" evidence="8">
    <location>
        <begin position="92"/>
        <end position="106"/>
    </location>
</feature>
<feature type="compositionally biased region" description="Low complexity" evidence="8">
    <location>
        <begin position="107"/>
        <end position="117"/>
    </location>
</feature>
<feature type="compositionally biased region" description="Low complexity" evidence="8">
    <location>
        <begin position="124"/>
        <end position="153"/>
    </location>
</feature>
<feature type="compositionally biased region" description="Low complexity" evidence="8">
    <location>
        <begin position="165"/>
        <end position="175"/>
    </location>
</feature>
<feature type="compositionally biased region" description="Low complexity" evidence="8">
    <location>
        <begin position="189"/>
        <end position="198"/>
    </location>
</feature>
<feature type="compositionally biased region" description="Low complexity" evidence="8">
    <location>
        <begin position="224"/>
        <end position="242"/>
    </location>
</feature>
<feature type="compositionally biased region" description="Gly residues" evidence="8">
    <location>
        <begin position="243"/>
        <end position="262"/>
    </location>
</feature>
<feature type="compositionally biased region" description="Pro residues" evidence="8">
    <location>
        <begin position="283"/>
        <end position="300"/>
    </location>
</feature>
<feature type="compositionally biased region" description="Low complexity" evidence="8">
    <location>
        <begin position="301"/>
        <end position="311"/>
    </location>
</feature>
<feature type="compositionally biased region" description="Pro residues" evidence="8">
    <location>
        <begin position="312"/>
        <end position="326"/>
    </location>
</feature>
<feature type="compositionally biased region" description="Basic and acidic residues" evidence="8">
    <location>
        <begin position="330"/>
        <end position="344"/>
    </location>
</feature>
<feature type="compositionally biased region" description="Low complexity" evidence="8">
    <location>
        <begin position="582"/>
        <end position="596"/>
    </location>
</feature>
<feature type="compositionally biased region" description="Low complexity" evidence="8">
    <location>
        <begin position="606"/>
        <end position="615"/>
    </location>
</feature>
<feature type="compositionally biased region" description="Basic and acidic residues" evidence="8">
    <location>
        <begin position="654"/>
        <end position="667"/>
    </location>
</feature>
<feature type="compositionally biased region" description="Pro residues" evidence="8">
    <location>
        <begin position="775"/>
        <end position="790"/>
    </location>
</feature>
<feature type="compositionally biased region" description="Low complexity" evidence="8">
    <location>
        <begin position="1154"/>
        <end position="1172"/>
    </location>
</feature>
<feature type="binding site" evidence="4">
    <location>
        <begin position="413"/>
        <end position="420"/>
    </location>
    <ligand>
        <name>GTP</name>
        <dbReference type="ChEBI" id="CHEBI:37565"/>
    </ligand>
</feature>
<feature type="binding site" evidence="4">
    <location>
        <begin position="457"/>
        <end position="461"/>
    </location>
    <ligand>
        <name>GTP</name>
        <dbReference type="ChEBI" id="CHEBI:37565"/>
    </ligand>
</feature>
<feature type="binding site" evidence="4">
    <location>
        <begin position="515"/>
        <end position="518"/>
    </location>
    <ligand>
        <name>GTP</name>
        <dbReference type="ChEBI" id="CHEBI:37565"/>
    </ligand>
</feature>
<feature type="modified residue" description="Phosphoserine" evidence="2">
    <location>
        <position position="113"/>
    </location>
</feature>
<feature type="modified residue" description="Phosphoserine" evidence="2">
    <location>
        <position position="128"/>
    </location>
</feature>
<feature type="modified residue" description="Phosphoserine" evidence="2">
    <location>
        <position position="149"/>
    </location>
</feature>
<feature type="modified residue" description="Phosphoserine" evidence="24">
    <location>
        <position position="638"/>
    </location>
</feature>
<feature type="modified residue" description="Phosphoserine" evidence="2">
    <location>
        <position position="750"/>
    </location>
</feature>
<feature type="modified residue" description="Phosphoserine" evidence="2">
    <location>
        <position position="752"/>
    </location>
</feature>
<feature type="modified residue" description="Phosphoserine" evidence="2">
    <location>
        <position position="808"/>
    </location>
</feature>
<feature type="modified residue" description="Phosphoserine" evidence="2">
    <location>
        <position position="927"/>
    </location>
</feature>
<feature type="modified residue" description="Phosphoserine" evidence="2">
    <location>
        <position position="985"/>
    </location>
</feature>
<feature type="modified residue" description="Phosphoserine" evidence="3">
    <location>
        <position position="1178"/>
    </location>
</feature>
<feature type="splice variant" id="VSP_018531" description="In isoform 2." evidence="18 19 20 21 22">
    <location>
        <begin position="1"/>
        <end position="336"/>
    </location>
</feature>
<feature type="splice variant" id="VSP_018532" description="In isoform 2." evidence="18 19 20 21 22">
    <original>ASTRDRKMLKFISGIFTKSTGGPPGSGPLPGPPSLSSGSGSRELLGAELRASPK</original>
    <variation>MHAQRQFVVAAVRAEVRRHEVAKQALNRLRKLAERVDDPELQDSIQASLDSIRE</variation>
    <location>
        <begin position="337"/>
        <end position="390"/>
    </location>
</feature>
<feature type="splice variant" id="VSP_018533" description="In isoform 2." evidence="18 19 20 21 22">
    <location>
        <begin position="853"/>
        <end position="872"/>
    </location>
</feature>
<feature type="sequence variant" id="VAR_036183" description="In a breast cancer sample; somatic mutation." evidence="16">
    <original>T</original>
    <variation>A</variation>
    <location>
        <position position="339"/>
    </location>
</feature>
<feature type="sequence variant" id="VAR_026438" description="In a glioblastoma cell line." evidence="14">
    <original>V</original>
    <variation>A</variation>
    <location>
        <position position="455"/>
    </location>
</feature>
<feature type="sequence variant" id="VAR_022046" description="In dbSNP:rs2301553.">
    <original>G</original>
    <variation>S</variation>
    <location>
        <position position="507"/>
    </location>
</feature>
<feature type="sequence variant" id="VAR_026439" description="In a sarcoma cell line." evidence="14">
    <original>R</original>
    <variation>G</variation>
    <location>
        <position position="518"/>
    </location>
</feature>
<feature type="sequence variant" id="VAR_026440" description="In a neuroblastoma cell line." evidence="14">
    <original>T</original>
    <variation>I</variation>
    <location>
        <position position="568"/>
    </location>
</feature>
<feature type="sequence variant" id="VAR_026441" description="In a glioblastoma cell line." evidence="14">
    <original>A</original>
    <variation>V</variation>
    <location>
        <position position="651"/>
    </location>
</feature>
<feature type="sequence variant" id="VAR_026442" description="In a glioblastoma cell line." evidence="14">
    <original>E</original>
    <variation>V</variation>
    <location>
        <position position="767"/>
    </location>
</feature>
<feature type="sequence variant" id="VAR_036184" description="In a breast cancer sample; somatic mutation." evidence="16">
    <original>D</original>
    <variation>Y</variation>
    <location>
        <position position="816"/>
    </location>
</feature>
<feature type="sequence variant" id="VAR_026443" description="In a glioblastoma cell line." evidence="14">
    <original>N</original>
    <variation>D</variation>
    <location>
        <position position="939"/>
    </location>
</feature>
<feature type="sequence variant" id="VAR_026444" description="In a sarcoma cell line." evidence="14">
    <original>V</original>
    <variation>M</variation>
    <location>
        <position position="947"/>
    </location>
</feature>
<feature type="sequence variant" id="VAR_026445" description="In a glioblastoma cell line." evidence="14">
    <original>S</original>
    <variation>P</variation>
    <location>
        <position position="1022"/>
    </location>
</feature>
<feature type="sequence variant" id="VAR_055532" description="In dbSNP:rs238521." evidence="17">
    <original>G</original>
    <variation>V</variation>
    <location>
        <position position="1124"/>
    </location>
</feature>
<feature type="sequence conflict" description="In Ref. 4; AAM97540." evidence="23" ref="4">
    <original>A</original>
    <variation>V</variation>
    <location>
        <position position="39"/>
    </location>
</feature>
<feature type="sequence conflict" description="In Ref. 4; AAM97540." evidence="23" ref="4">
    <original>A</original>
    <variation>P</variation>
    <location>
        <position position="42"/>
    </location>
</feature>
<feature type="sequence conflict" description="In Ref. 4; AAM97540." evidence="23" ref="4">
    <original>TG</original>
    <variation>PR</variation>
    <location>
        <begin position="49"/>
        <end position="50"/>
    </location>
</feature>
<feature type="sequence conflict" description="In Ref. 4; AAM97540." evidence="23" ref="4">
    <original>T</original>
    <variation>A</variation>
    <location>
        <position position="85"/>
    </location>
</feature>
<feature type="sequence conflict" description="In Ref. 4; AAM97540." evidence="23" ref="4">
    <original>V</original>
    <variation>A</variation>
    <location>
        <position position="117"/>
    </location>
</feature>
<feature type="sequence conflict" description="In Ref. 4; AAM97540." evidence="23" ref="4">
    <original>P</original>
    <variation>S</variation>
    <location>
        <position position="131"/>
    </location>
</feature>
<feature type="sequence conflict" description="In Ref. 4; AAM97540." evidence="23" ref="4">
    <original>T</original>
    <variation>S</variation>
    <location>
        <position position="138"/>
    </location>
</feature>
<feature type="sequence conflict" description="In Ref. 4; AAM97540." evidence="23" ref="4">
    <original>A</original>
    <variation>T</variation>
    <location>
        <position position="159"/>
    </location>
</feature>
<feature type="sequence conflict" description="In Ref. 4; AAM97540." evidence="23" ref="4">
    <original>I</original>
    <variation>V</variation>
    <location>
        <position position="163"/>
    </location>
</feature>
<feature type="sequence conflict" description="In Ref. 1; AAC39522." evidence="23" ref="1">
    <original>Q</original>
    <variation>H</variation>
    <location>
        <position position="1137"/>
    </location>
</feature>
<feature type="sequence conflict" description="In Ref. 1; AAC39522." evidence="23" ref="1">
    <original>G</original>
    <variation>A</variation>
    <location>
        <position position="1147"/>
    </location>
</feature>
<feature type="strand" evidence="26">
    <location>
        <begin position="406"/>
        <end position="412"/>
    </location>
</feature>
<feature type="helix" evidence="26">
    <location>
        <begin position="415"/>
        <end position="417"/>
    </location>
</feature>
<feature type="helix" evidence="26">
    <location>
        <begin position="419"/>
        <end position="428"/>
    </location>
</feature>
<feature type="strand" evidence="26">
    <location>
        <begin position="438"/>
        <end position="448"/>
    </location>
</feature>
<feature type="strand" evidence="26">
    <location>
        <begin position="451"/>
        <end position="459"/>
    </location>
</feature>
<feature type="strand" evidence="26">
    <location>
        <begin position="461"/>
        <end position="463"/>
    </location>
</feature>
<feature type="helix" evidence="26">
    <location>
        <begin position="466"/>
        <end position="471"/>
    </location>
</feature>
<feature type="strand" evidence="26">
    <location>
        <begin position="473"/>
        <end position="480"/>
    </location>
</feature>
<feature type="helix" evidence="26">
    <location>
        <begin position="484"/>
        <end position="501"/>
    </location>
</feature>
<feature type="strand" evidence="26">
    <location>
        <begin position="503"/>
        <end position="505"/>
    </location>
</feature>
<feature type="strand" evidence="26">
    <location>
        <begin position="509"/>
        <end position="515"/>
    </location>
</feature>
<feature type="strand" evidence="25">
    <location>
        <begin position="521"/>
        <end position="523"/>
    </location>
</feature>
<feature type="helix" evidence="26">
    <location>
        <begin position="529"/>
        <end position="539"/>
    </location>
</feature>
<feature type="strand" evidence="26">
    <location>
        <begin position="540"/>
        <end position="548"/>
    </location>
</feature>
<feature type="turn" evidence="26">
    <location>
        <begin position="549"/>
        <end position="552"/>
    </location>
</feature>
<feature type="helix" evidence="26">
    <location>
        <begin position="555"/>
        <end position="574"/>
    </location>
</feature>
<feature type="strand" evidence="27">
    <location>
        <begin position="677"/>
        <end position="686"/>
    </location>
</feature>
<feature type="strand" evidence="27">
    <location>
        <begin position="695"/>
        <end position="703"/>
    </location>
</feature>
<feature type="turn" evidence="27">
    <location>
        <begin position="704"/>
        <end position="706"/>
    </location>
</feature>
<feature type="strand" evidence="27">
    <location>
        <begin position="707"/>
        <end position="713"/>
    </location>
</feature>
<feature type="helix" evidence="27">
    <location>
        <begin position="714"/>
        <end position="719"/>
    </location>
</feature>
<feature type="strand" evidence="27">
    <location>
        <begin position="724"/>
        <end position="730"/>
    </location>
</feature>
<feature type="strand" evidence="27">
    <location>
        <begin position="732"/>
        <end position="734"/>
    </location>
</feature>
<feature type="strand" evidence="27">
    <location>
        <begin position="878"/>
        <end position="881"/>
    </location>
</feature>
<feature type="strand" evidence="27">
    <location>
        <begin position="887"/>
        <end position="894"/>
    </location>
</feature>
<feature type="helix" evidence="27">
    <location>
        <begin position="895"/>
        <end position="913"/>
    </location>
</feature>
<feature type="modified residue" description="Phosphotyrosine" evidence="15">
    <location sequence="Q99490-2">
        <position position="682"/>
    </location>
</feature>
<feature type="modified residue" description="Phosphotyrosine" evidence="15">
    <location sequence="Q99490-2">
        <position position="774"/>
    </location>
</feature>
<name>AGAP2_HUMAN</name>
<proteinExistence type="evidence at protein level"/>
<sequence length="1192" mass="124591">MSRGAGALQRRTTTYLISLTLVKLESVPPPPPSPSAAAAGAAGARGSETGDPGSPRGAEEPGKKRHERLFHRQDALWISTSSAGTGGAEPPALSPAPASPARPVSPAPGRRLSLWAVPPGPPLSGGLSPDPKPGGAPTSSRRPLLSSPSWGGPEPEGRAGGGIPGSSSPHPGTGSRRLKVAPPPPAPKPCKTVTTSGAKAGGGKGAGSRLSWPESEGKPRVKGSKSSAGTGASVSAAATAAAAGGGGSTASTSGGVGAGAGARGKLSPRKGKSKTLDNSDLHPGPPAGSPPPLTLPPTPSPATAVTAASAQPPGPAPPITLEPPAPGLKRGREGGRASTRDRKMLKFISGIFTKSTGGPPGSGPLPGPPSLSSGSGSRELLGAELRASPKAVINSQEWTLSRSIPELRLGVLGDARSGKSSLIHRFLTGSYQVLEKTESEQYKKEMLVDGQTHLVLIREEAGAPDAKFSGWADAVIFVFSLEDENSFQAVSRLHGQLSSLRGEGRGGLALALVGTQDRISASSPRVVGDARARALCADMKRCSYYETCATYGLNVDRVFQEVAQKVVTLRKQQQLLAACKSLPSSPSHSAASTPVAGQASNGGHTSDYSSSLPSSPNVGHRELRAEAAAVAGLSTPGSLHRAAKRRTSLFANRRGSDSEKRSLDSRGETTGSGRAIPIKQSFLLKRSGNSLNKEWKKKYVTLSSNGFLLYHPSINDYIHSTHGKEMDLLRTTVKVPGKRPPRAISAFGPSASINGLVKDMSTVQMGEGLEATTPMPSPSPSPSSLQPPPDQTSKHLLKPDRNLARALSTDCTPSGDLSPLSREPPPSPMVKKQRRKKLTTPSKTEGSAGQAEAKRKMWKLKSFGSLRNIYKAEENFEFLIVSSTGQTWHFEAASFEERDAWVQAIESQILASLQCCESSKVKLRTDSQSEAVAIQAIRNAKGNSICVDCGAPNPTWASLNLGALICIECSGIHRNLGTHLSRVRSLDLDDWPRELTLVLTAIGNDTANRVWESDTRGRAKPSRDSSREERESWIRAKYEQLLFLAPLSTSEEPLGRQLWAAVQAQDVATVLLLLAHARHGPLDTSVEDPQLRSPLHLAAELAHVVITQLLLWYGADVAARDAQGRTALFYARQAGSQLCADILLQHGCPGEGGSAATTPSAATTPSITATPSPRRRSSAASVGRADAPVALV</sequence>
<comment type="function">
    <text evidence="9 10 11 12">GTPase-activating protein (GAP) for ARF1 and ARF5, which also shows strong GTPase activity. Isoform 1 participates in the prevention of neuronal apoptosis by enhancing PI3 kinase activity. It aids the coupling of metabotropic glutamate receptor 1 (GRM1) to cytoplasmic PI3 kinase by interacting with Homer scaffolding proteins, and also seems to mediate anti-apoptotic effects of NGF by activating nuclear PI3 kinase. Isoform 2 does not stimulate PI3 kinase but may protect cells from apoptosis by stimulating Akt. It also regulates the adapter protein 1 (AP-1)-dependent trafficking of proteins in the endosomal system. It seems to be oncogenic. It is overexpressed in cancer cells, prevents apoptosis and promotes cancer cell invasion.</text>
</comment>
<comment type="activity regulation">
    <text>GAP activity is stimulated by phosphatidylinositol 4,5-bisphosphate (PIP2) and, to a lesser extent, by phosphatidylinositol 3,4,5-trisphosphate (PIP3). Phosphatidic acid potentiates PIP2 stimulation.</text>
</comment>
<comment type="subunit">
    <text evidence="1 10 11 12">Isoform 1 interacts with EPB41L1, PLCG1, NF2, HOMER1 and HOMER2 (By similarity). Isoform 2 interacts with activated AKT1 in the presence of guanine nucleotides, and with the AP-1 complex.</text>
</comment>
<comment type="interaction">
    <interactant intactId="EBI-2361824">
        <id>Q99490</id>
    </interactant>
    <interactant intactId="EBI-475899">
        <id>P06213</id>
        <label>INSR</label>
    </interactant>
    <organismsDiffer>false</organismsDiffer>
    <experiments>2</experiments>
</comment>
<comment type="interaction">
    <interactant intactId="EBI-7737644">
        <id>Q99490-2</id>
    </interactant>
    <interactant intactId="EBI-749537">
        <id>P42229</id>
        <label>STAT5A</label>
    </interactant>
    <organismsDiffer>false</organismsDiffer>
    <experiments>3</experiments>
</comment>
<comment type="interaction">
    <interactant intactId="EBI-7737644">
        <id>Q99490-2</id>
    </interactant>
    <interactant intactId="EBI-7737664">
        <id>Q08501</id>
        <label>Prlr</label>
    </interactant>
    <organismsDiffer>true</organismsDiffer>
    <experiments>2</experiments>
</comment>
<comment type="interaction">
    <interactant intactId="EBI-7737644">
        <id>Q99490-2</id>
    </interactant>
    <interactant intactId="EBI-617434">
        <id>P42230</id>
        <label>Stat5a</label>
    </interactant>
    <organismsDiffer>true</organismsDiffer>
    <experiments>2</experiments>
</comment>
<comment type="subcellular location">
    <molecule>Isoform 1</molecule>
    <subcellularLocation>
        <location>Cytoplasm</location>
    </subcellularLocation>
    <subcellularLocation>
        <location>Nucleus</location>
    </subcellularLocation>
</comment>
<comment type="subcellular location">
    <molecule>Isoform 2</molecule>
    <subcellularLocation>
        <location>Cytoplasm</location>
    </subcellularLocation>
</comment>
<comment type="alternative products">
    <event type="alternative splicing"/>
    <isoform>
        <id>Q99490-1</id>
        <name>1</name>
        <name>PIKE-L</name>
        <sequence type="displayed"/>
    </isoform>
    <isoform>
        <id>Q99490-2</id>
        <name>2</name>
        <name>PIKE-A</name>
        <sequence type="described" ref="VSP_018531 VSP_018532 VSP_018533"/>
    </isoform>
</comment>
<comment type="tissue specificity">
    <text evidence="9 10 11 12 13">Isoform 1 is brain-specific. Isoform 2 is ubiquitously expressed, with highest levels in brain and heart.</text>
</comment>
<comment type="domain">
    <text>G domain binds GTP and has GTPase activity.</text>
</comment>
<comment type="domain">
    <text>Arf-GAP domain interacts with G domain and may regulate its GTPase activity.</text>
</comment>
<comment type="domain">
    <text>Although both PH domains of isoforms 1 and 2 bind phospholipids, they differently regulate subcellular location. PH domain of isoform 1 directs the protein to the nucleus, but PH domain of isoform 2 directs it to the cytosol. PH domain of isoform 2 is required for binding to AP-1.</text>
</comment>
<comment type="PTM">
    <text evidence="15">Isoform PIKE-A is phosphorylated at Tyr-682 and Tyr-774 by FYN, preventing its apoptotic cleavage.</text>
</comment>
<comment type="similarity">
    <text evidence="7 23">Belongs to the centaurin gamma-like family.</text>
</comment>
<comment type="sequence caution" evidence="23">
    <conflict type="erroneous initiation">
        <sequence resource="EMBL-CDS" id="BAA11484"/>
    </conflict>
</comment>
<comment type="online information" name="Atlas of Genetics and Cytogenetics in Oncology and Haematology">
    <link uri="https://atlasgeneticsoncology.org/gene/44037/CENTG1"/>
</comment>
<protein>
    <recommendedName>
        <fullName>Arf-GAP with GTPase, ANK repeat and PH domain-containing protein 2</fullName>
        <shortName>AGAP-2</shortName>
    </recommendedName>
    <alternativeName>
        <fullName>Centaurin-gamma-1</fullName>
        <shortName>Cnt-g1</shortName>
    </alternativeName>
    <alternativeName>
        <fullName>GTP-binding and GTPase-activating protein 2</fullName>
        <shortName>GGAP2</shortName>
    </alternativeName>
    <alternativeName>
        <fullName>Phosphatidylinositol 3-kinase enhancer</fullName>
        <shortName>PIKE</shortName>
    </alternativeName>
</protein>